<feature type="chain" id="PRO_0000330299" description="Peroxisomal membrane protein 11E">
    <location>
        <begin position="1"/>
        <end position="231"/>
    </location>
</feature>
<feature type="topological domain" description="Cytoplasmic" evidence="2">
    <location>
        <begin position="1"/>
        <end position="91"/>
    </location>
</feature>
<feature type="transmembrane region" description="Helical" evidence="1">
    <location>
        <begin position="92"/>
        <end position="108"/>
    </location>
</feature>
<feature type="topological domain" description="Lumenal" evidence="2">
    <location>
        <begin position="109"/>
        <end position="202"/>
    </location>
</feature>
<feature type="transmembrane region" description="Helical" evidence="1">
    <location>
        <begin position="203"/>
        <end position="222"/>
    </location>
</feature>
<feature type="topological domain" description="Cytoplasmic" evidence="2">
    <location>
        <begin position="223"/>
        <end position="231"/>
    </location>
</feature>
<feature type="sequence conflict" description="In Ref. 1; CAD58676." evidence="6" ref="1">
    <original>TP</original>
    <variation>KS</variation>
    <location>
        <begin position="230"/>
        <end position="231"/>
    </location>
</feature>
<name>PX11E_ARATH</name>
<organism>
    <name type="scientific">Arabidopsis thaliana</name>
    <name type="common">Mouse-ear cress</name>
    <dbReference type="NCBI Taxonomy" id="3702"/>
    <lineage>
        <taxon>Eukaryota</taxon>
        <taxon>Viridiplantae</taxon>
        <taxon>Streptophyta</taxon>
        <taxon>Embryophyta</taxon>
        <taxon>Tracheophyta</taxon>
        <taxon>Spermatophyta</taxon>
        <taxon>Magnoliopsida</taxon>
        <taxon>eudicotyledons</taxon>
        <taxon>Gunneridae</taxon>
        <taxon>Pentapetalae</taxon>
        <taxon>rosids</taxon>
        <taxon>malvids</taxon>
        <taxon>Brassicales</taxon>
        <taxon>Brassicaceae</taxon>
        <taxon>Camelineae</taxon>
        <taxon>Arabidopsis</taxon>
    </lineage>
</organism>
<accession>Q84JW1</accession>
<accession>Q5QT11</accession>
<accession>Q9LEW9</accession>
<reference key="1">
    <citation type="submission" date="2002-12" db="EMBL/GenBank/DDBJ databases">
        <title>AtPEX11 and peroxisome proliferation in Arabidopsis thaliana.</title>
        <authorList>
            <person name="El Shami M."/>
            <person name="Baker A."/>
        </authorList>
    </citation>
    <scope>NUCLEOTIDE SEQUENCE [MRNA]</scope>
    <source>
        <tissue>Seedling</tissue>
    </source>
</reference>
<reference key="2">
    <citation type="journal article" date="2000" name="Nature">
        <title>Sequence and analysis of chromosome 3 of the plant Arabidopsis thaliana.</title>
        <authorList>
            <person name="Salanoubat M."/>
            <person name="Lemcke K."/>
            <person name="Rieger M."/>
            <person name="Ansorge W."/>
            <person name="Unseld M."/>
            <person name="Fartmann B."/>
            <person name="Valle G."/>
            <person name="Bloecker H."/>
            <person name="Perez-Alonso M."/>
            <person name="Obermaier B."/>
            <person name="Delseny M."/>
            <person name="Boutry M."/>
            <person name="Grivell L.A."/>
            <person name="Mache R."/>
            <person name="Puigdomenech P."/>
            <person name="De Simone V."/>
            <person name="Choisne N."/>
            <person name="Artiguenave F."/>
            <person name="Robert C."/>
            <person name="Brottier P."/>
            <person name="Wincker P."/>
            <person name="Cattolico L."/>
            <person name="Weissenbach J."/>
            <person name="Saurin W."/>
            <person name="Quetier F."/>
            <person name="Schaefer M."/>
            <person name="Mueller-Auer S."/>
            <person name="Gabel C."/>
            <person name="Fuchs M."/>
            <person name="Benes V."/>
            <person name="Wurmbach E."/>
            <person name="Drzonek H."/>
            <person name="Erfle H."/>
            <person name="Jordan N."/>
            <person name="Bangert S."/>
            <person name="Wiedelmann R."/>
            <person name="Kranz H."/>
            <person name="Voss H."/>
            <person name="Holland R."/>
            <person name="Brandt P."/>
            <person name="Nyakatura G."/>
            <person name="Vezzi A."/>
            <person name="D'Angelo M."/>
            <person name="Pallavicini A."/>
            <person name="Toppo S."/>
            <person name="Simionati B."/>
            <person name="Conrad A."/>
            <person name="Hornischer K."/>
            <person name="Kauer G."/>
            <person name="Loehnert T.-H."/>
            <person name="Nordsiek G."/>
            <person name="Reichelt J."/>
            <person name="Scharfe M."/>
            <person name="Schoen O."/>
            <person name="Bargues M."/>
            <person name="Terol J."/>
            <person name="Climent J."/>
            <person name="Navarro P."/>
            <person name="Collado C."/>
            <person name="Perez-Perez A."/>
            <person name="Ottenwaelder B."/>
            <person name="Duchemin D."/>
            <person name="Cooke R."/>
            <person name="Laudie M."/>
            <person name="Berger-Llauro C."/>
            <person name="Purnelle B."/>
            <person name="Masuy D."/>
            <person name="de Haan M."/>
            <person name="Maarse A.C."/>
            <person name="Alcaraz J.-P."/>
            <person name="Cottet A."/>
            <person name="Casacuberta E."/>
            <person name="Monfort A."/>
            <person name="Argiriou A."/>
            <person name="Flores M."/>
            <person name="Liguori R."/>
            <person name="Vitale D."/>
            <person name="Mannhaupt G."/>
            <person name="Haase D."/>
            <person name="Schoof H."/>
            <person name="Rudd S."/>
            <person name="Zaccaria P."/>
            <person name="Mewes H.-W."/>
            <person name="Mayer K.F.X."/>
            <person name="Kaul S."/>
            <person name="Town C.D."/>
            <person name="Koo H.L."/>
            <person name="Tallon L.J."/>
            <person name="Jenkins J."/>
            <person name="Rooney T."/>
            <person name="Rizzo M."/>
            <person name="Walts A."/>
            <person name="Utterback T."/>
            <person name="Fujii C.Y."/>
            <person name="Shea T.P."/>
            <person name="Creasy T.H."/>
            <person name="Haas B."/>
            <person name="Maiti R."/>
            <person name="Wu D."/>
            <person name="Peterson J."/>
            <person name="Van Aken S."/>
            <person name="Pai G."/>
            <person name="Militscher J."/>
            <person name="Sellers P."/>
            <person name="Gill J.E."/>
            <person name="Feldblyum T.V."/>
            <person name="Preuss D."/>
            <person name="Lin X."/>
            <person name="Nierman W.C."/>
            <person name="Salzberg S.L."/>
            <person name="White O."/>
            <person name="Venter J.C."/>
            <person name="Fraser C.M."/>
            <person name="Kaneko T."/>
            <person name="Nakamura Y."/>
            <person name="Sato S."/>
            <person name="Kato T."/>
            <person name="Asamizu E."/>
            <person name="Sasamoto S."/>
            <person name="Kimura T."/>
            <person name="Idesawa K."/>
            <person name="Kawashima K."/>
            <person name="Kishida Y."/>
            <person name="Kiyokawa C."/>
            <person name="Kohara M."/>
            <person name="Matsumoto M."/>
            <person name="Matsuno A."/>
            <person name="Muraki A."/>
            <person name="Nakayama S."/>
            <person name="Nakazaki N."/>
            <person name="Shinpo S."/>
            <person name="Takeuchi C."/>
            <person name="Wada T."/>
            <person name="Watanabe A."/>
            <person name="Yamada M."/>
            <person name="Yasuda M."/>
            <person name="Tabata S."/>
        </authorList>
    </citation>
    <scope>NUCLEOTIDE SEQUENCE [LARGE SCALE GENOMIC DNA]</scope>
    <source>
        <strain>cv. Columbia</strain>
    </source>
</reference>
<reference key="3">
    <citation type="journal article" date="2017" name="Plant J.">
        <title>Araport11: a complete reannotation of the Arabidopsis thaliana reference genome.</title>
        <authorList>
            <person name="Cheng C.Y."/>
            <person name="Krishnakumar V."/>
            <person name="Chan A.P."/>
            <person name="Thibaud-Nissen F."/>
            <person name="Schobel S."/>
            <person name="Town C.D."/>
        </authorList>
    </citation>
    <scope>GENOME REANNOTATION</scope>
    <source>
        <strain>cv. Columbia</strain>
    </source>
</reference>
<reference key="4">
    <citation type="journal article" date="2003" name="Science">
        <title>Empirical analysis of transcriptional activity in the Arabidopsis genome.</title>
        <authorList>
            <person name="Yamada K."/>
            <person name="Lim J."/>
            <person name="Dale J.M."/>
            <person name="Chen H."/>
            <person name="Shinn P."/>
            <person name="Palm C.J."/>
            <person name="Southwick A.M."/>
            <person name="Wu H.C."/>
            <person name="Kim C.J."/>
            <person name="Nguyen M."/>
            <person name="Pham P.K."/>
            <person name="Cheuk R.F."/>
            <person name="Karlin-Newmann G."/>
            <person name="Liu S.X."/>
            <person name="Lam B."/>
            <person name="Sakano H."/>
            <person name="Wu T."/>
            <person name="Yu G."/>
            <person name="Miranda M."/>
            <person name="Quach H.L."/>
            <person name="Tripp M."/>
            <person name="Chang C.H."/>
            <person name="Lee J.M."/>
            <person name="Toriumi M.J."/>
            <person name="Chan M.M."/>
            <person name="Tang C.C."/>
            <person name="Onodera C.S."/>
            <person name="Deng J.M."/>
            <person name="Akiyama K."/>
            <person name="Ansari Y."/>
            <person name="Arakawa T."/>
            <person name="Banh J."/>
            <person name="Banno F."/>
            <person name="Bowser L."/>
            <person name="Brooks S.Y."/>
            <person name="Carninci P."/>
            <person name="Chao Q."/>
            <person name="Choy N."/>
            <person name="Enju A."/>
            <person name="Goldsmith A.D."/>
            <person name="Gurjal M."/>
            <person name="Hansen N.F."/>
            <person name="Hayashizaki Y."/>
            <person name="Johnson-Hopson C."/>
            <person name="Hsuan V.W."/>
            <person name="Iida K."/>
            <person name="Karnes M."/>
            <person name="Khan S."/>
            <person name="Koesema E."/>
            <person name="Ishida J."/>
            <person name="Jiang P.X."/>
            <person name="Jones T."/>
            <person name="Kawai J."/>
            <person name="Kamiya A."/>
            <person name="Meyers C."/>
            <person name="Nakajima M."/>
            <person name="Narusaka M."/>
            <person name="Seki M."/>
            <person name="Sakurai T."/>
            <person name="Satou M."/>
            <person name="Tamse R."/>
            <person name="Vaysberg M."/>
            <person name="Wallender E.K."/>
            <person name="Wong C."/>
            <person name="Yamamura Y."/>
            <person name="Yuan S."/>
            <person name="Shinozaki K."/>
            <person name="Davis R.W."/>
            <person name="Theologis A."/>
            <person name="Ecker J.R."/>
        </authorList>
    </citation>
    <scope>NUCLEOTIDE SEQUENCE [LARGE SCALE MRNA]</scope>
    <source>
        <strain>cv. Columbia</strain>
    </source>
</reference>
<reference key="5">
    <citation type="journal article" date="2006" name="J. Cell Sci.">
        <title>Five Arabidopsis peroxin 11 homologs individually promote peroxisome elongation, duplication or aggregation.</title>
        <authorList>
            <person name="Lingard M.J."/>
            <person name="Trelease R.N."/>
        </authorList>
    </citation>
    <scope>FUNCTION</scope>
    <scope>TOPOLOGY</scope>
    <scope>TISSUE SPECIFICITY</scope>
    <scope>NOMENCLATURE</scope>
</reference>
<reference key="6">
    <citation type="journal article" date="2007" name="Plant Cell">
        <title>The PEROXIN11 protein family controls peroxisome proliferation in Arabidopsis.</title>
        <authorList>
            <person name="Orth T."/>
            <person name="Reumann S."/>
            <person name="Zhang X."/>
            <person name="Fan J."/>
            <person name="Wenzel D."/>
            <person name="Quan S."/>
            <person name="Hu J."/>
        </authorList>
    </citation>
    <scope>FUNCTION</scope>
    <scope>SUBCELLULAR LOCATION</scope>
    <scope>TISSUE SPECIFICITY</scope>
    <scope>INDUCTION</scope>
    <scope>GENE FAMILY</scope>
</reference>
<reference key="7">
    <citation type="journal article" date="2008" name="Plant Cell">
        <title>Arabidopsis PEROXIN11c-e, FISSION1b, and DYNAMIN-RELATED PROTEIN3A cooperate in cell cycle-associated replication of peroxisomes.</title>
        <authorList>
            <person name="Lingard M.J."/>
            <person name="Gidda S.K."/>
            <person name="Bingham S."/>
            <person name="Rothstein S.J."/>
            <person name="Mullen R.T."/>
            <person name="Trelease R.N."/>
        </authorList>
    </citation>
    <scope>SUBUNIT</scope>
    <scope>INTERACTION WITH FIS1B</scope>
</reference>
<reference key="8">
    <citation type="journal article" date="2010" name="Plant Cell">
        <title>The Arabidopsis chloroplast division protein DYNAMIN-RELATED PROTEIN5B also mediates peroxisome division.</title>
        <authorList>
            <person name="Zhang X."/>
            <person name="Hu J."/>
        </authorList>
    </citation>
    <scope>INTERACTION WITH ARC5 AND FIS1B</scope>
    <scope>SUBCELLULAR LOCATION</scope>
    <scope>SELF-INTERACTION</scope>
</reference>
<gene>
    <name type="primary">PEX11E</name>
    <name type="synonym">PEX11-2</name>
    <name type="ordered locus">At3g61070</name>
    <name type="ORF">T27I15.160</name>
</gene>
<protein>
    <recommendedName>
        <fullName>Peroxisomal membrane protein 11E</fullName>
    </recommendedName>
    <alternativeName>
        <fullName>Peroxin-11E</fullName>
        <shortName>AtPEX11e</shortName>
    </alternativeName>
</protein>
<keyword id="KW-0472">Membrane</keyword>
<keyword id="KW-0576">Peroxisome</keyword>
<keyword id="KW-0962">Peroxisome biogenesis</keyword>
<keyword id="KW-1185">Reference proteome</keyword>
<keyword id="KW-0812">Transmembrane</keyword>
<keyword id="KW-1133">Transmembrane helix</keyword>
<proteinExistence type="evidence at protein level"/>
<sequence length="231" mass="25512">MTTLDLTRAELALIVLYLNKAEARDKICRAIQYGSKFLSGGQPGTAQTVDKNTSLARKVFRLFKFVNDFHGLISPVPKGTPLPLVLLGKSKNALLSTFLFLDQIVWLGRSGIYKNKERTELLGRISLFCWLGSSVCTSAVEIGELGRLSSSMKKMEKELKADDELYRAKLQKSNDRTLALIKSSMDIIVAIGLLQLAPKTISPRVTGAFGFTTSLISCYQLLPSRPKLKTP</sequence>
<dbReference type="EMBL" id="AJ520105">
    <property type="protein sequence ID" value="CAD58676.1"/>
    <property type="molecule type" value="mRNA"/>
</dbReference>
<dbReference type="EMBL" id="AL358732">
    <property type="protein sequence ID" value="CAB94143.1"/>
    <property type="status" value="ALT_SEQ"/>
    <property type="molecule type" value="Genomic_DNA"/>
</dbReference>
<dbReference type="EMBL" id="CP002686">
    <property type="protein sequence ID" value="AEE80148.1"/>
    <property type="molecule type" value="Genomic_DNA"/>
</dbReference>
<dbReference type="EMBL" id="CP002686">
    <property type="protein sequence ID" value="AEE80149.1"/>
    <property type="molecule type" value="Genomic_DNA"/>
</dbReference>
<dbReference type="EMBL" id="CP002686">
    <property type="protein sequence ID" value="AEE80150.1"/>
    <property type="molecule type" value="Genomic_DNA"/>
</dbReference>
<dbReference type="EMBL" id="BT002962">
    <property type="protein sequence ID" value="AAO22773.1"/>
    <property type="molecule type" value="mRNA"/>
</dbReference>
<dbReference type="EMBL" id="BT004439">
    <property type="protein sequence ID" value="AAO42433.1"/>
    <property type="molecule type" value="mRNA"/>
</dbReference>
<dbReference type="PIR" id="T50528">
    <property type="entry name" value="T50528"/>
</dbReference>
<dbReference type="RefSeq" id="NP_001078322.1">
    <property type="nucleotide sequence ID" value="NM_001084853.2"/>
</dbReference>
<dbReference type="RefSeq" id="NP_001190149.1">
    <property type="nucleotide sequence ID" value="NM_001203220.1"/>
</dbReference>
<dbReference type="RefSeq" id="NP_191666.2">
    <property type="nucleotide sequence ID" value="NM_115971.3"/>
</dbReference>
<dbReference type="BioGRID" id="10593">
    <property type="interactions" value="4"/>
</dbReference>
<dbReference type="FunCoup" id="Q84JW1">
    <property type="interactions" value="294"/>
</dbReference>
<dbReference type="STRING" id="3702.Q84JW1"/>
<dbReference type="SwissPalm" id="Q84JW1"/>
<dbReference type="PaxDb" id="3702-AT3G61070.3"/>
<dbReference type="ProteomicsDB" id="224821"/>
<dbReference type="EnsemblPlants" id="AT3G61070.1">
    <property type="protein sequence ID" value="AT3G61070.1"/>
    <property type="gene ID" value="AT3G61070"/>
</dbReference>
<dbReference type="EnsemblPlants" id="AT3G61070.2">
    <property type="protein sequence ID" value="AT3G61070.2"/>
    <property type="gene ID" value="AT3G61070"/>
</dbReference>
<dbReference type="EnsemblPlants" id="AT3G61070.3">
    <property type="protein sequence ID" value="AT3G61070.3"/>
    <property type="gene ID" value="AT3G61070"/>
</dbReference>
<dbReference type="GeneID" id="825279"/>
<dbReference type="Gramene" id="AT3G61070.1">
    <property type="protein sequence ID" value="AT3G61070.1"/>
    <property type="gene ID" value="AT3G61070"/>
</dbReference>
<dbReference type="Gramene" id="AT3G61070.2">
    <property type="protein sequence ID" value="AT3G61070.2"/>
    <property type="gene ID" value="AT3G61070"/>
</dbReference>
<dbReference type="Gramene" id="AT3G61070.3">
    <property type="protein sequence ID" value="AT3G61070.3"/>
    <property type="gene ID" value="AT3G61070"/>
</dbReference>
<dbReference type="KEGG" id="ath:AT3G61070"/>
<dbReference type="Araport" id="AT3G61070"/>
<dbReference type="TAIR" id="AT3G61070">
    <property type="gene designation" value="PEX11E"/>
</dbReference>
<dbReference type="eggNOG" id="KOG4186">
    <property type="taxonomic scope" value="Eukaryota"/>
</dbReference>
<dbReference type="HOGENOM" id="CLU_075417_0_0_1"/>
<dbReference type="InParanoid" id="Q84JW1"/>
<dbReference type="OMA" id="HMIHIAR"/>
<dbReference type="OrthoDB" id="411017at2759"/>
<dbReference type="PhylomeDB" id="Q84JW1"/>
<dbReference type="CD-CODE" id="4299E36E">
    <property type="entry name" value="Nucleolus"/>
</dbReference>
<dbReference type="PRO" id="PR:Q84JW1"/>
<dbReference type="Proteomes" id="UP000006548">
    <property type="component" value="Chromosome 3"/>
</dbReference>
<dbReference type="ExpressionAtlas" id="Q84JW1">
    <property type="expression patterns" value="baseline and differential"/>
</dbReference>
<dbReference type="GO" id="GO:0005829">
    <property type="term" value="C:cytosol"/>
    <property type="evidence" value="ECO:0007005"/>
    <property type="project" value="TAIR"/>
</dbReference>
<dbReference type="GO" id="GO:0005739">
    <property type="term" value="C:mitochondrion"/>
    <property type="evidence" value="ECO:0007005"/>
    <property type="project" value="TAIR"/>
</dbReference>
<dbReference type="GO" id="GO:0005778">
    <property type="term" value="C:peroxisomal membrane"/>
    <property type="evidence" value="ECO:0007669"/>
    <property type="project" value="UniProtKB-SubCell"/>
</dbReference>
<dbReference type="GO" id="GO:0005777">
    <property type="term" value="C:peroxisome"/>
    <property type="evidence" value="ECO:0000314"/>
    <property type="project" value="UniProtKB"/>
</dbReference>
<dbReference type="GO" id="GO:0042802">
    <property type="term" value="F:identical protein binding"/>
    <property type="evidence" value="ECO:0000314"/>
    <property type="project" value="UniProtKB"/>
</dbReference>
<dbReference type="GO" id="GO:0007623">
    <property type="term" value="P:circadian rhythm"/>
    <property type="evidence" value="ECO:0000270"/>
    <property type="project" value="TAIR"/>
</dbReference>
<dbReference type="GO" id="GO:0016559">
    <property type="term" value="P:peroxisome fission"/>
    <property type="evidence" value="ECO:0000314"/>
    <property type="project" value="UniProtKB"/>
</dbReference>
<dbReference type="GO" id="GO:0007031">
    <property type="term" value="P:peroxisome organization"/>
    <property type="evidence" value="ECO:0000315"/>
    <property type="project" value="TAIR"/>
</dbReference>
<dbReference type="GO" id="GO:0044375">
    <property type="term" value="P:regulation of peroxisome size"/>
    <property type="evidence" value="ECO:0000314"/>
    <property type="project" value="UniProtKB"/>
</dbReference>
<dbReference type="InterPro" id="IPR008733">
    <property type="entry name" value="PEX11"/>
</dbReference>
<dbReference type="PANTHER" id="PTHR12652">
    <property type="entry name" value="PEROXISOMAL BIOGENESIS FACTOR 11"/>
    <property type="match status" value="1"/>
</dbReference>
<dbReference type="PANTHER" id="PTHR12652:SF46">
    <property type="entry name" value="PEROXISOMAL MEMBRANE PROTEIN 11E"/>
    <property type="match status" value="1"/>
</dbReference>
<dbReference type="Pfam" id="PF05648">
    <property type="entry name" value="PEX11"/>
    <property type="match status" value="1"/>
</dbReference>
<evidence type="ECO:0000255" key="1"/>
<evidence type="ECO:0000269" key="2">
    <source>
    </source>
</evidence>
<evidence type="ECO:0000269" key="3">
    <source>
    </source>
</evidence>
<evidence type="ECO:0000269" key="4">
    <source>
    </source>
</evidence>
<evidence type="ECO:0000269" key="5">
    <source>
    </source>
</evidence>
<evidence type="ECO:0000305" key="6"/>
<comment type="function">
    <text evidence="2 3">Involved in peroxisomal proliferation. Promotes peroxisomal duplication, aggregation or elongation without fission.</text>
</comment>
<comment type="subunit">
    <text evidence="4 5">Homooligomer. Interacts with ARC5 and FIS1B on peroxisomes.</text>
</comment>
<comment type="subcellular location">
    <subcellularLocation>
        <location evidence="3 5">Peroxisome membrane</location>
        <topology evidence="3 5">Multi-pass membrane protein</topology>
    </subcellularLocation>
</comment>
<comment type="tissue specificity">
    <text evidence="2 3">Expressed in leaves and developing siliques.</text>
</comment>
<comment type="induction">
    <text evidence="3">Up-regulated during sensecence. Down-regulated in seedlings by transition from dark to light.</text>
</comment>
<comment type="miscellaneous">
    <text>Can complement the yeast pex11 null mutant.</text>
</comment>
<comment type="similarity">
    <text evidence="6">Belongs to the peroxin-11 family.</text>
</comment>
<comment type="sequence caution" evidence="6">
    <conflict type="erroneous gene model prediction">
        <sequence resource="EMBL-CDS" id="CAB94143"/>
    </conflict>
</comment>